<proteinExistence type="inferred from homology"/>
<feature type="chain" id="PRO_0000110462" description="Beta-ketoacyl-[acyl-carrier-protein] synthase III">
    <location>
        <begin position="1"/>
        <end position="317"/>
    </location>
</feature>
<feature type="region of interest" description="ACP-binding" evidence="1">
    <location>
        <begin position="245"/>
        <end position="249"/>
    </location>
</feature>
<feature type="active site" evidence="1">
    <location>
        <position position="112"/>
    </location>
</feature>
<feature type="active site" evidence="1">
    <location>
        <position position="244"/>
    </location>
</feature>
<feature type="active site" evidence="1">
    <location>
        <position position="274"/>
    </location>
</feature>
<dbReference type="EC" id="2.3.1.180" evidence="1"/>
<dbReference type="EMBL" id="AJ235273">
    <property type="protein sequence ID" value="CAA15199.1"/>
    <property type="molecule type" value="Genomic_DNA"/>
</dbReference>
<dbReference type="PIR" id="G71637">
    <property type="entry name" value="G71637"/>
</dbReference>
<dbReference type="RefSeq" id="NP_221123.1">
    <property type="nucleotide sequence ID" value="NC_000963.1"/>
</dbReference>
<dbReference type="RefSeq" id="WP_010886368.1">
    <property type="nucleotide sequence ID" value="NC_000963.1"/>
</dbReference>
<dbReference type="SMR" id="Q9ZCH1"/>
<dbReference type="STRING" id="272947.gene:17555842"/>
<dbReference type="EnsemblBacteria" id="CAA15199">
    <property type="protein sequence ID" value="CAA15199"/>
    <property type="gene ID" value="CAA15199"/>
</dbReference>
<dbReference type="KEGG" id="rpr:RP772"/>
<dbReference type="PATRIC" id="fig|272947.5.peg.807"/>
<dbReference type="eggNOG" id="COG0332">
    <property type="taxonomic scope" value="Bacteria"/>
</dbReference>
<dbReference type="HOGENOM" id="CLU_039592_4_1_5"/>
<dbReference type="OrthoDB" id="9815506at2"/>
<dbReference type="UniPathway" id="UPA00094"/>
<dbReference type="Proteomes" id="UP000002480">
    <property type="component" value="Chromosome"/>
</dbReference>
<dbReference type="GO" id="GO:0005737">
    <property type="term" value="C:cytoplasm"/>
    <property type="evidence" value="ECO:0007669"/>
    <property type="project" value="UniProtKB-SubCell"/>
</dbReference>
<dbReference type="GO" id="GO:0004315">
    <property type="term" value="F:3-oxoacyl-[acyl-carrier-protein] synthase activity"/>
    <property type="evidence" value="ECO:0007669"/>
    <property type="project" value="InterPro"/>
</dbReference>
<dbReference type="GO" id="GO:0033818">
    <property type="term" value="F:beta-ketoacyl-acyl-carrier-protein synthase III activity"/>
    <property type="evidence" value="ECO:0007669"/>
    <property type="project" value="UniProtKB-UniRule"/>
</dbReference>
<dbReference type="GO" id="GO:0006633">
    <property type="term" value="P:fatty acid biosynthetic process"/>
    <property type="evidence" value="ECO:0007669"/>
    <property type="project" value="UniProtKB-UniRule"/>
</dbReference>
<dbReference type="GO" id="GO:0044550">
    <property type="term" value="P:secondary metabolite biosynthetic process"/>
    <property type="evidence" value="ECO:0007669"/>
    <property type="project" value="TreeGrafter"/>
</dbReference>
<dbReference type="CDD" id="cd00830">
    <property type="entry name" value="KAS_III"/>
    <property type="match status" value="1"/>
</dbReference>
<dbReference type="FunFam" id="3.40.47.10:FF:000004">
    <property type="entry name" value="3-oxoacyl-[acyl-carrier-protein] synthase 3"/>
    <property type="match status" value="1"/>
</dbReference>
<dbReference type="Gene3D" id="3.40.47.10">
    <property type="match status" value="1"/>
</dbReference>
<dbReference type="HAMAP" id="MF_01815">
    <property type="entry name" value="FabH"/>
    <property type="match status" value="1"/>
</dbReference>
<dbReference type="InterPro" id="IPR013747">
    <property type="entry name" value="ACP_syn_III_C"/>
</dbReference>
<dbReference type="InterPro" id="IPR013751">
    <property type="entry name" value="ACP_syn_III_N"/>
</dbReference>
<dbReference type="InterPro" id="IPR004655">
    <property type="entry name" value="FabH"/>
</dbReference>
<dbReference type="InterPro" id="IPR016039">
    <property type="entry name" value="Thiolase-like"/>
</dbReference>
<dbReference type="NCBIfam" id="TIGR00747">
    <property type="entry name" value="fabH"/>
    <property type="match status" value="1"/>
</dbReference>
<dbReference type="NCBIfam" id="NF006829">
    <property type="entry name" value="PRK09352.1"/>
    <property type="match status" value="1"/>
</dbReference>
<dbReference type="PANTHER" id="PTHR34069">
    <property type="entry name" value="3-OXOACYL-[ACYL-CARRIER-PROTEIN] SYNTHASE 3"/>
    <property type="match status" value="1"/>
</dbReference>
<dbReference type="PANTHER" id="PTHR34069:SF2">
    <property type="entry name" value="BETA-KETOACYL-[ACYL-CARRIER-PROTEIN] SYNTHASE III"/>
    <property type="match status" value="1"/>
</dbReference>
<dbReference type="Pfam" id="PF08545">
    <property type="entry name" value="ACP_syn_III"/>
    <property type="match status" value="1"/>
</dbReference>
<dbReference type="Pfam" id="PF08541">
    <property type="entry name" value="ACP_syn_III_C"/>
    <property type="match status" value="1"/>
</dbReference>
<dbReference type="SUPFAM" id="SSF53901">
    <property type="entry name" value="Thiolase-like"/>
    <property type="match status" value="1"/>
</dbReference>
<gene>
    <name evidence="1" type="primary">fabH</name>
    <name type="ordered locus">RP772</name>
</gene>
<keyword id="KW-0012">Acyltransferase</keyword>
<keyword id="KW-0963">Cytoplasm</keyword>
<keyword id="KW-0275">Fatty acid biosynthesis</keyword>
<keyword id="KW-0276">Fatty acid metabolism</keyword>
<keyword id="KW-0444">Lipid biosynthesis</keyword>
<keyword id="KW-0443">Lipid metabolism</keyword>
<keyword id="KW-0511">Multifunctional enzyme</keyword>
<keyword id="KW-1185">Reference proteome</keyword>
<keyword id="KW-0808">Transferase</keyword>
<reference key="1">
    <citation type="journal article" date="1998" name="Nature">
        <title>The genome sequence of Rickettsia prowazekii and the origin of mitochondria.</title>
        <authorList>
            <person name="Andersson S.G.E."/>
            <person name="Zomorodipour A."/>
            <person name="Andersson J.O."/>
            <person name="Sicheritz-Ponten T."/>
            <person name="Alsmark U.C.M."/>
            <person name="Podowski R.M."/>
            <person name="Naeslund A.K."/>
            <person name="Eriksson A.-S."/>
            <person name="Winkler H.H."/>
            <person name="Kurland C.G."/>
        </authorList>
    </citation>
    <scope>NUCLEOTIDE SEQUENCE [LARGE SCALE GENOMIC DNA]</scope>
    <source>
        <strain>Madrid E</strain>
    </source>
</reference>
<name>FABH_RICPR</name>
<protein>
    <recommendedName>
        <fullName evidence="1">Beta-ketoacyl-[acyl-carrier-protein] synthase III</fullName>
        <shortName evidence="1">Beta-ketoacyl-ACP synthase III</shortName>
        <shortName evidence="1">KAS III</shortName>
        <ecNumber evidence="1">2.3.1.180</ecNumber>
    </recommendedName>
    <alternativeName>
        <fullName evidence="1">3-oxoacyl-[acyl-carrier-protein] synthase 3</fullName>
    </alternativeName>
    <alternativeName>
        <fullName evidence="1">3-oxoacyl-[acyl-carrier-protein] synthase III</fullName>
    </alternativeName>
</protein>
<accession>Q9ZCH1</accession>
<evidence type="ECO:0000255" key="1">
    <source>
        <dbReference type="HAMAP-Rule" id="MF_01815"/>
    </source>
</evidence>
<sequence>MTCKIIGSGGYLPPKIISNDELTKFVDTNDKWIRTRTGILQRHIAGDAEYTSHLAFKSAQKAIEDAMISVDDIDLIIICTTTPDNSFPSVATKLHGYLGLTNIPSFDLQAVCAGFIYGLQLAHSLIVSGKYKTILLIGAEKMTSLLDWNDRSTCVLFGDGAGSVILQRSNDDSGLIDSNIFSSGTDYEILYTSGGTSMNGTSGKIVMQGQKLFRHAIEKMLQSIEDLLYANQFSVSDIDYFIPHQANIRIINKLAELLNIEEHKVVKTVEKHANCSAASIPLALSALKESGKIKKGDILLFSAIGAGLTWGGALIRW</sequence>
<comment type="function">
    <text evidence="1">Catalyzes the condensation reaction of fatty acid synthesis by the addition to an acyl acceptor of two carbons from malonyl-ACP. Catalyzes the first condensation reaction which initiates fatty acid synthesis and may therefore play a role in governing the total rate of fatty acid production. Possesses both acetoacetyl-ACP synthase and acetyl transacylase activities. Its substrate specificity determines the biosynthesis of branched-chain and/or straight-chain of fatty acids.</text>
</comment>
<comment type="catalytic activity">
    <reaction evidence="1">
        <text>malonyl-[ACP] + acetyl-CoA + H(+) = 3-oxobutanoyl-[ACP] + CO2 + CoA</text>
        <dbReference type="Rhea" id="RHEA:12080"/>
        <dbReference type="Rhea" id="RHEA-COMP:9623"/>
        <dbReference type="Rhea" id="RHEA-COMP:9625"/>
        <dbReference type="ChEBI" id="CHEBI:15378"/>
        <dbReference type="ChEBI" id="CHEBI:16526"/>
        <dbReference type="ChEBI" id="CHEBI:57287"/>
        <dbReference type="ChEBI" id="CHEBI:57288"/>
        <dbReference type="ChEBI" id="CHEBI:78449"/>
        <dbReference type="ChEBI" id="CHEBI:78450"/>
        <dbReference type="EC" id="2.3.1.180"/>
    </reaction>
</comment>
<comment type="pathway">
    <text evidence="1">Lipid metabolism; fatty acid biosynthesis.</text>
</comment>
<comment type="subunit">
    <text evidence="1">Homodimer.</text>
</comment>
<comment type="subcellular location">
    <subcellularLocation>
        <location evidence="1">Cytoplasm</location>
    </subcellularLocation>
</comment>
<comment type="domain">
    <text evidence="1">The last Arg residue of the ACP-binding site is essential for the weak association between ACP/AcpP and FabH.</text>
</comment>
<comment type="similarity">
    <text evidence="1">Belongs to the thiolase-like superfamily. FabH family.</text>
</comment>
<organism>
    <name type="scientific">Rickettsia prowazekii (strain Madrid E)</name>
    <dbReference type="NCBI Taxonomy" id="272947"/>
    <lineage>
        <taxon>Bacteria</taxon>
        <taxon>Pseudomonadati</taxon>
        <taxon>Pseudomonadota</taxon>
        <taxon>Alphaproteobacteria</taxon>
        <taxon>Rickettsiales</taxon>
        <taxon>Rickettsiaceae</taxon>
        <taxon>Rickettsieae</taxon>
        <taxon>Rickettsia</taxon>
        <taxon>typhus group</taxon>
    </lineage>
</organism>